<feature type="chain" id="PRO_0000406081" description="Formate hydrogenlyase transcriptional activator">
    <location>
        <begin position="1"/>
        <end position="692"/>
    </location>
</feature>
<feature type="domain" description="GAF">
    <location>
        <begin position="202"/>
        <end position="344"/>
    </location>
</feature>
<feature type="domain" description="Sigma-54 factor interaction" evidence="2">
    <location>
        <begin position="381"/>
        <end position="610"/>
    </location>
</feature>
<feature type="DNA-binding region" description="H-T-H motif" evidence="1">
    <location>
        <begin position="663"/>
        <end position="682"/>
    </location>
</feature>
<feature type="binding site" evidence="2">
    <location>
        <begin position="409"/>
        <end position="416"/>
    </location>
    <ligand>
        <name>ATP</name>
        <dbReference type="ChEBI" id="CHEBI:30616"/>
    </ligand>
</feature>
<feature type="binding site" evidence="2">
    <location>
        <begin position="472"/>
        <end position="481"/>
    </location>
    <ligand>
        <name>ATP</name>
        <dbReference type="ChEBI" id="CHEBI:30616"/>
    </ligand>
</feature>
<feature type="sequence conflict" description="In Ref. 2; AAA80577." evidence="3" ref="2">
    <original>A</original>
    <variation>D</variation>
    <location>
        <position position="639"/>
    </location>
</feature>
<feature type="sequence conflict" description="In Ref. 2; AAA80577." evidence="3" ref="2">
    <original>LA</original>
    <variation>FERVAGSDRLEMMRAVAWRFPFTSCADIFPAIPERALIVDKVPHGQDRMPPKHSRTCPTHNLLHLLAFSRLIAVHRALLTAGFSSPNTHLSRRFCA</variation>
    <location>
        <begin position="691"/>
        <end position="692"/>
    </location>
</feature>
<gene>
    <name type="primary">fhlA</name>
    <name type="ordered locus">SL1344_2839</name>
</gene>
<name>FHLA_SALTS</name>
<accession>E1WAA4</accession>
<accession>P40734</accession>
<accession>Q9L6U9</accession>
<sequence length="692" mass="78253">MSYTPMSDLGQQGLFDITRTLLQQPDLASLSEALSQLVKRSALADSAGIVLWQAQSQRAQYYATRENGRPVEYEDETVLAHGPVRRILSRPDALHCNFHEFTETWPQLAASGLYPEFGHYCLLPLAAEGRIFGGCEFIRQEDRPWSEKEYDRLHTFTQIVGVVAEQIQNRVNNNVDYDLLCRERDNFRILVAITNAVLSRLDIDELVSEVAKEIHHYFNIDAISIVLRSHRKNKLNIYSTHYLDEHHPAHEQSEVDEAGTLTERVFKSKEMLLINLNERDPLAPYERMLFDTWGNQIQTLCLLPLMSGKTMLGVLKLAQCEEKVFTTANLKLLRQIAERVAIAVDNALAYQEIHRLKERLVDENLALTEQLNNVDSEFGEIIGRSEAMYNVLKQVEMVAQSDSTVLILGETGTGKELIARAIHNLSGRSGRRMVKMNCAAMPAGLLESDLFGHERGAFTGASAQRIGRFELADKSSLFLDEVGDMPLELQPKLLRVLQEQEFERLGSNKLIQTDVRLIAATNRDLKKMVADREFRNDLYYRLNVFPIQLPPLRERPEDIPLLVKAFTFKIARRMGRNIDSIPAETLRTLSSMEWPGNVRELENVVERAVLLTRGNVLQLSLPDITAVTPDTSPVATESAKEGEDEYQLIIRVLKETNGVVAGPKGAAQRLGLKRTTLLSRMKRLGIDKDALA</sequence>
<reference key="1">
    <citation type="journal article" date="2012" name="Proc. Natl. Acad. Sci. U.S.A.">
        <title>The transcriptional landscape and small RNAs of Salmonella enterica serovar Typhimurium.</title>
        <authorList>
            <person name="Kroger C."/>
            <person name="Dillon S.C."/>
            <person name="Cameron A.D."/>
            <person name="Papenfort K."/>
            <person name="Sivasankaran S.K."/>
            <person name="Hokamp K."/>
            <person name="Chao Y."/>
            <person name="Sittka A."/>
            <person name="Hebrard M."/>
            <person name="Handler K."/>
            <person name="Colgan A."/>
            <person name="Leekitcharoenphon P."/>
            <person name="Langridge G.C."/>
            <person name="Lohan A.J."/>
            <person name="Loftus B."/>
            <person name="Lucchini S."/>
            <person name="Ussery D.W."/>
            <person name="Dorman C.J."/>
            <person name="Thomson N.R."/>
            <person name="Vogel J."/>
            <person name="Hinton J.C."/>
        </authorList>
    </citation>
    <scope>NUCLEOTIDE SEQUENCE [LARGE SCALE GENOMIC DNA]</scope>
    <source>
        <strain>SL1344</strain>
    </source>
</reference>
<reference key="2">
    <citation type="journal article" date="1995" name="Mol. Microbiol.">
        <title>A 40 kb chromosomal fragment encoding Salmonella typhimurium invasion genes is absent from the corresponding region of the Escherichia coli K-12 chromosome.</title>
        <authorList>
            <person name="Mills D.M."/>
            <person name="Bajaj V."/>
            <person name="Lee C.A."/>
        </authorList>
    </citation>
    <scope>NUCLEOTIDE SEQUENCE [GENOMIC DNA] OF 534-692</scope>
    <source>
        <strain>SL1344</strain>
    </source>
</reference>
<proteinExistence type="inferred from homology"/>
<dbReference type="EMBL" id="FQ312003">
    <property type="protein sequence ID" value="CBW18937.1"/>
    <property type="molecule type" value="Genomic_DNA"/>
</dbReference>
<dbReference type="EMBL" id="U16278">
    <property type="protein sequence ID" value="AAA80577.1"/>
    <property type="molecule type" value="Genomic_DNA"/>
</dbReference>
<dbReference type="SMR" id="E1WAA4"/>
<dbReference type="KEGG" id="sey:SL1344_2839"/>
<dbReference type="PATRIC" id="fig|216597.6.peg.3160"/>
<dbReference type="HOGENOM" id="CLU_000445_95_0_6"/>
<dbReference type="BioCyc" id="SENT216597:SL1344_RS14805-MONOMER"/>
<dbReference type="Proteomes" id="UP000008962">
    <property type="component" value="Chromosome"/>
</dbReference>
<dbReference type="GO" id="GO:0005524">
    <property type="term" value="F:ATP binding"/>
    <property type="evidence" value="ECO:0007669"/>
    <property type="project" value="UniProtKB-KW"/>
</dbReference>
<dbReference type="GO" id="GO:0016887">
    <property type="term" value="F:ATP hydrolysis activity"/>
    <property type="evidence" value="ECO:0007669"/>
    <property type="project" value="InterPro"/>
</dbReference>
<dbReference type="GO" id="GO:0003677">
    <property type="term" value="F:DNA binding"/>
    <property type="evidence" value="ECO:0007669"/>
    <property type="project" value="UniProtKB-KW"/>
</dbReference>
<dbReference type="GO" id="GO:0000160">
    <property type="term" value="P:phosphorelay signal transduction system"/>
    <property type="evidence" value="ECO:0007669"/>
    <property type="project" value="UniProtKB-KW"/>
</dbReference>
<dbReference type="GO" id="GO:0006355">
    <property type="term" value="P:regulation of DNA-templated transcription"/>
    <property type="evidence" value="ECO:0007669"/>
    <property type="project" value="InterPro"/>
</dbReference>
<dbReference type="CDD" id="cd00009">
    <property type="entry name" value="AAA"/>
    <property type="match status" value="1"/>
</dbReference>
<dbReference type="FunFam" id="1.10.8.60:FF:000014">
    <property type="entry name" value="DNA-binding transcriptional regulator NtrC"/>
    <property type="match status" value="1"/>
</dbReference>
<dbReference type="FunFam" id="3.40.50.300:FF:000006">
    <property type="entry name" value="DNA-binding transcriptional regulator NtrC"/>
    <property type="match status" value="1"/>
</dbReference>
<dbReference type="FunFam" id="3.30.450.40:FF:000024">
    <property type="entry name" value="Formate hydrogenlyase transcriptional activator"/>
    <property type="match status" value="1"/>
</dbReference>
<dbReference type="Gene3D" id="1.10.8.60">
    <property type="match status" value="1"/>
</dbReference>
<dbReference type="Gene3D" id="3.30.450.40">
    <property type="match status" value="2"/>
</dbReference>
<dbReference type="Gene3D" id="1.10.10.60">
    <property type="entry name" value="Homeodomain-like"/>
    <property type="match status" value="1"/>
</dbReference>
<dbReference type="Gene3D" id="3.40.50.300">
    <property type="entry name" value="P-loop containing nucleotide triphosphate hydrolases"/>
    <property type="match status" value="1"/>
</dbReference>
<dbReference type="InterPro" id="IPR003593">
    <property type="entry name" value="AAA+_ATPase"/>
</dbReference>
<dbReference type="InterPro" id="IPR003018">
    <property type="entry name" value="GAF"/>
</dbReference>
<dbReference type="InterPro" id="IPR029016">
    <property type="entry name" value="GAF-like_dom_sf"/>
</dbReference>
<dbReference type="InterPro" id="IPR009057">
    <property type="entry name" value="Homeodomain-like_sf"/>
</dbReference>
<dbReference type="InterPro" id="IPR027417">
    <property type="entry name" value="P-loop_NTPase"/>
</dbReference>
<dbReference type="InterPro" id="IPR002078">
    <property type="entry name" value="Sigma_54_int"/>
</dbReference>
<dbReference type="InterPro" id="IPR025662">
    <property type="entry name" value="Sigma_54_int_dom_ATP-bd_1"/>
</dbReference>
<dbReference type="InterPro" id="IPR025944">
    <property type="entry name" value="Sigma_54_int_dom_CS"/>
</dbReference>
<dbReference type="NCBIfam" id="NF011958">
    <property type="entry name" value="PRK15429.1"/>
    <property type="match status" value="1"/>
</dbReference>
<dbReference type="PANTHER" id="PTHR32071:SF123">
    <property type="entry name" value="DNA-BINDING TRANSCRIPTIONAL ACTIVATOR HYFR-RELATED"/>
    <property type="match status" value="1"/>
</dbReference>
<dbReference type="PANTHER" id="PTHR32071">
    <property type="entry name" value="TRANSCRIPTIONAL REGULATORY PROTEIN"/>
    <property type="match status" value="1"/>
</dbReference>
<dbReference type="Pfam" id="PF01590">
    <property type="entry name" value="GAF"/>
    <property type="match status" value="1"/>
</dbReference>
<dbReference type="Pfam" id="PF00158">
    <property type="entry name" value="Sigma54_activat"/>
    <property type="match status" value="1"/>
</dbReference>
<dbReference type="SMART" id="SM00382">
    <property type="entry name" value="AAA"/>
    <property type="match status" value="1"/>
</dbReference>
<dbReference type="SMART" id="SM00065">
    <property type="entry name" value="GAF"/>
    <property type="match status" value="2"/>
</dbReference>
<dbReference type="SUPFAM" id="SSF55781">
    <property type="entry name" value="GAF domain-like"/>
    <property type="match status" value="2"/>
</dbReference>
<dbReference type="SUPFAM" id="SSF46689">
    <property type="entry name" value="Homeodomain-like"/>
    <property type="match status" value="1"/>
</dbReference>
<dbReference type="SUPFAM" id="SSF52540">
    <property type="entry name" value="P-loop containing nucleoside triphosphate hydrolases"/>
    <property type="match status" value="1"/>
</dbReference>
<dbReference type="PROSITE" id="PS00675">
    <property type="entry name" value="SIGMA54_INTERACT_1"/>
    <property type="match status" value="1"/>
</dbReference>
<dbReference type="PROSITE" id="PS00688">
    <property type="entry name" value="SIGMA54_INTERACT_3"/>
    <property type="match status" value="1"/>
</dbReference>
<dbReference type="PROSITE" id="PS50045">
    <property type="entry name" value="SIGMA54_INTERACT_4"/>
    <property type="match status" value="1"/>
</dbReference>
<evidence type="ECO:0000250" key="1"/>
<evidence type="ECO:0000255" key="2">
    <source>
        <dbReference type="PROSITE-ProRule" id="PRU00193"/>
    </source>
</evidence>
<evidence type="ECO:0000305" key="3"/>
<protein>
    <recommendedName>
        <fullName>Formate hydrogenlyase transcriptional activator</fullName>
    </recommendedName>
</protein>
<organism>
    <name type="scientific">Salmonella typhimurium (strain SL1344)</name>
    <dbReference type="NCBI Taxonomy" id="216597"/>
    <lineage>
        <taxon>Bacteria</taxon>
        <taxon>Pseudomonadati</taxon>
        <taxon>Pseudomonadota</taxon>
        <taxon>Gammaproteobacteria</taxon>
        <taxon>Enterobacterales</taxon>
        <taxon>Enterobacteriaceae</taxon>
        <taxon>Salmonella</taxon>
    </lineage>
</organism>
<keyword id="KW-0010">Activator</keyword>
<keyword id="KW-0067">ATP-binding</keyword>
<keyword id="KW-0238">DNA-binding</keyword>
<keyword id="KW-0547">Nucleotide-binding</keyword>
<keyword id="KW-0804">Transcription</keyword>
<keyword id="KW-0805">Transcription regulation</keyword>
<keyword id="KW-0902">Two-component regulatory system</keyword>
<comment type="function">
    <text evidence="1">Required for induction of expression of the formate dehydrogenase H and hydrogenase-3 structural genes.</text>
</comment>